<accession>Q3B127</accession>
<organism>
    <name type="scientific">Chlorobium luteolum (strain DSM 273 / BCRC 81028 / 2530)</name>
    <name type="common">Pelodictyon luteolum</name>
    <dbReference type="NCBI Taxonomy" id="319225"/>
    <lineage>
        <taxon>Bacteria</taxon>
        <taxon>Pseudomonadati</taxon>
        <taxon>Chlorobiota</taxon>
        <taxon>Chlorobiia</taxon>
        <taxon>Chlorobiales</taxon>
        <taxon>Chlorobiaceae</taxon>
        <taxon>Chlorobium/Pelodictyon group</taxon>
        <taxon>Pelodictyon</taxon>
    </lineage>
</organism>
<evidence type="ECO:0000255" key="1">
    <source>
        <dbReference type="HAMAP-Rule" id="MF_00639"/>
    </source>
</evidence>
<proteinExistence type="inferred from homology"/>
<feature type="chain" id="PRO_0000257212" description="UDP-N-acetylmuramoylalanine--D-glutamate ligase">
    <location>
        <begin position="1"/>
        <end position="460"/>
    </location>
</feature>
<feature type="binding site" evidence="1">
    <location>
        <begin position="115"/>
        <end position="121"/>
    </location>
    <ligand>
        <name>ATP</name>
        <dbReference type="ChEBI" id="CHEBI:30616"/>
    </ligand>
</feature>
<reference key="1">
    <citation type="submission" date="2005-08" db="EMBL/GenBank/DDBJ databases">
        <title>Complete sequence of Pelodictyon luteolum DSM 273.</title>
        <authorList>
            <consortium name="US DOE Joint Genome Institute"/>
            <person name="Copeland A."/>
            <person name="Lucas S."/>
            <person name="Lapidus A."/>
            <person name="Barry K."/>
            <person name="Detter J.C."/>
            <person name="Glavina T."/>
            <person name="Hammon N."/>
            <person name="Israni S."/>
            <person name="Pitluck S."/>
            <person name="Bryant D."/>
            <person name="Schmutz J."/>
            <person name="Larimer F."/>
            <person name="Land M."/>
            <person name="Kyrpides N."/>
            <person name="Ivanova N."/>
            <person name="Richardson P."/>
        </authorList>
    </citation>
    <scope>NUCLEOTIDE SEQUENCE [LARGE SCALE GENOMIC DNA]</scope>
    <source>
        <strain>DSM 273 / BCRC 81028 / 2530</strain>
    </source>
</reference>
<protein>
    <recommendedName>
        <fullName evidence="1">UDP-N-acetylmuramoylalanine--D-glutamate ligase</fullName>
        <ecNumber evidence="1">6.3.2.9</ecNumber>
    </recommendedName>
    <alternativeName>
        <fullName evidence="1">D-glutamic acid-adding enzyme</fullName>
    </alternativeName>
    <alternativeName>
        <fullName evidence="1">UDP-N-acetylmuramoyl-L-alanyl-D-glutamate synthetase</fullName>
    </alternativeName>
</protein>
<sequence length="460" mass="49476">MKRADLAGRKVSVIGAGRSGNAAVELLLCHGARVLLSEKGALDPDTALRFRQRGAEVESEGHSDRVFDADFAVVSPGVPPGVPVIRELERRQIPVHSEIELASWFCRARIAGITGTDGKTTTATLVQRMAEAVGRLGGYRAYGVGNIGVPFSSKVEEMEERDIAVVELSSYQLERCSSFRPEAALITNITPDHLDRYGGDIMRYADAKYRIAMNLGSSGTLVYNADDPILRARFSVGGLQFSTVPFSTAGPVGGDPSSGIYLEDGWVHAGLRRLIHTSEFQKGSFRGNHNNSNVLGAIGLARALRLDEKAVLQALREFPGVEHRQEFVASKRGSDWINDSKATNVNAMRQALEAVPGRIVLIAGGRDKGNDYSAVATLVREKADLVVAMGESRQKVADAFRADVAVVEAATLEDAVRLAAGGAGTGRTVLFSPGCASFDLFRDFEDRGRSFKAEVGRLEA</sequence>
<comment type="function">
    <text evidence="1">Cell wall formation. Catalyzes the addition of glutamate to the nucleotide precursor UDP-N-acetylmuramoyl-L-alanine (UMA).</text>
</comment>
<comment type="catalytic activity">
    <reaction evidence="1">
        <text>UDP-N-acetyl-alpha-D-muramoyl-L-alanine + D-glutamate + ATP = UDP-N-acetyl-alpha-D-muramoyl-L-alanyl-D-glutamate + ADP + phosphate + H(+)</text>
        <dbReference type="Rhea" id="RHEA:16429"/>
        <dbReference type="ChEBI" id="CHEBI:15378"/>
        <dbReference type="ChEBI" id="CHEBI:29986"/>
        <dbReference type="ChEBI" id="CHEBI:30616"/>
        <dbReference type="ChEBI" id="CHEBI:43474"/>
        <dbReference type="ChEBI" id="CHEBI:83898"/>
        <dbReference type="ChEBI" id="CHEBI:83900"/>
        <dbReference type="ChEBI" id="CHEBI:456216"/>
        <dbReference type="EC" id="6.3.2.9"/>
    </reaction>
</comment>
<comment type="pathway">
    <text evidence="1">Cell wall biogenesis; peptidoglycan biosynthesis.</text>
</comment>
<comment type="subcellular location">
    <subcellularLocation>
        <location evidence="1">Cytoplasm</location>
    </subcellularLocation>
</comment>
<comment type="similarity">
    <text evidence="1">Belongs to the MurCDEF family.</text>
</comment>
<gene>
    <name evidence="1" type="primary">murD</name>
    <name type="ordered locus">Plut_2112</name>
</gene>
<dbReference type="EC" id="6.3.2.9" evidence="1"/>
<dbReference type="EMBL" id="CP000096">
    <property type="protein sequence ID" value="ABB24954.1"/>
    <property type="molecule type" value="Genomic_DNA"/>
</dbReference>
<dbReference type="RefSeq" id="WP_011358824.1">
    <property type="nucleotide sequence ID" value="NC_007512.1"/>
</dbReference>
<dbReference type="SMR" id="Q3B127"/>
<dbReference type="STRING" id="319225.Plut_2112"/>
<dbReference type="KEGG" id="plt:Plut_2112"/>
<dbReference type="eggNOG" id="COG0771">
    <property type="taxonomic scope" value="Bacteria"/>
</dbReference>
<dbReference type="HOGENOM" id="CLU_032540_0_0_10"/>
<dbReference type="OrthoDB" id="9809796at2"/>
<dbReference type="UniPathway" id="UPA00219"/>
<dbReference type="Proteomes" id="UP000002709">
    <property type="component" value="Chromosome"/>
</dbReference>
<dbReference type="GO" id="GO:0005737">
    <property type="term" value="C:cytoplasm"/>
    <property type="evidence" value="ECO:0007669"/>
    <property type="project" value="UniProtKB-SubCell"/>
</dbReference>
<dbReference type="GO" id="GO:0005524">
    <property type="term" value="F:ATP binding"/>
    <property type="evidence" value="ECO:0007669"/>
    <property type="project" value="UniProtKB-UniRule"/>
</dbReference>
<dbReference type="GO" id="GO:0008764">
    <property type="term" value="F:UDP-N-acetylmuramoylalanine-D-glutamate ligase activity"/>
    <property type="evidence" value="ECO:0007669"/>
    <property type="project" value="UniProtKB-UniRule"/>
</dbReference>
<dbReference type="GO" id="GO:0051301">
    <property type="term" value="P:cell division"/>
    <property type="evidence" value="ECO:0007669"/>
    <property type="project" value="UniProtKB-KW"/>
</dbReference>
<dbReference type="GO" id="GO:0071555">
    <property type="term" value="P:cell wall organization"/>
    <property type="evidence" value="ECO:0007669"/>
    <property type="project" value="UniProtKB-KW"/>
</dbReference>
<dbReference type="GO" id="GO:0009252">
    <property type="term" value="P:peptidoglycan biosynthetic process"/>
    <property type="evidence" value="ECO:0007669"/>
    <property type="project" value="UniProtKB-UniRule"/>
</dbReference>
<dbReference type="GO" id="GO:0008360">
    <property type="term" value="P:regulation of cell shape"/>
    <property type="evidence" value="ECO:0007669"/>
    <property type="project" value="UniProtKB-KW"/>
</dbReference>
<dbReference type="Gene3D" id="3.90.190.20">
    <property type="entry name" value="Mur ligase, C-terminal domain"/>
    <property type="match status" value="1"/>
</dbReference>
<dbReference type="Gene3D" id="3.40.1190.10">
    <property type="entry name" value="Mur-like, catalytic domain"/>
    <property type="match status" value="1"/>
</dbReference>
<dbReference type="Gene3D" id="3.40.50.720">
    <property type="entry name" value="NAD(P)-binding Rossmann-like Domain"/>
    <property type="match status" value="1"/>
</dbReference>
<dbReference type="HAMAP" id="MF_00639">
    <property type="entry name" value="MurD"/>
    <property type="match status" value="1"/>
</dbReference>
<dbReference type="InterPro" id="IPR036565">
    <property type="entry name" value="Mur-like_cat_sf"/>
</dbReference>
<dbReference type="InterPro" id="IPR004101">
    <property type="entry name" value="Mur_ligase_C"/>
</dbReference>
<dbReference type="InterPro" id="IPR036615">
    <property type="entry name" value="Mur_ligase_C_dom_sf"/>
</dbReference>
<dbReference type="InterPro" id="IPR013221">
    <property type="entry name" value="Mur_ligase_cen"/>
</dbReference>
<dbReference type="InterPro" id="IPR005762">
    <property type="entry name" value="MurD"/>
</dbReference>
<dbReference type="NCBIfam" id="TIGR01087">
    <property type="entry name" value="murD"/>
    <property type="match status" value="1"/>
</dbReference>
<dbReference type="PANTHER" id="PTHR43692">
    <property type="entry name" value="UDP-N-ACETYLMURAMOYLALANINE--D-GLUTAMATE LIGASE"/>
    <property type="match status" value="1"/>
</dbReference>
<dbReference type="PANTHER" id="PTHR43692:SF1">
    <property type="entry name" value="UDP-N-ACETYLMURAMOYLALANINE--D-GLUTAMATE LIGASE"/>
    <property type="match status" value="1"/>
</dbReference>
<dbReference type="Pfam" id="PF02875">
    <property type="entry name" value="Mur_ligase_C"/>
    <property type="match status" value="1"/>
</dbReference>
<dbReference type="Pfam" id="PF08245">
    <property type="entry name" value="Mur_ligase_M"/>
    <property type="match status" value="1"/>
</dbReference>
<dbReference type="Pfam" id="PF21377">
    <property type="entry name" value="MurD_N"/>
    <property type="match status" value="1"/>
</dbReference>
<dbReference type="SUPFAM" id="SSF51984">
    <property type="entry name" value="MurCD N-terminal domain"/>
    <property type="match status" value="1"/>
</dbReference>
<dbReference type="SUPFAM" id="SSF53623">
    <property type="entry name" value="MurD-like peptide ligases, catalytic domain"/>
    <property type="match status" value="1"/>
</dbReference>
<dbReference type="SUPFAM" id="SSF53244">
    <property type="entry name" value="MurD-like peptide ligases, peptide-binding domain"/>
    <property type="match status" value="1"/>
</dbReference>
<name>MURD_CHLL3</name>
<keyword id="KW-0067">ATP-binding</keyword>
<keyword id="KW-0131">Cell cycle</keyword>
<keyword id="KW-0132">Cell division</keyword>
<keyword id="KW-0133">Cell shape</keyword>
<keyword id="KW-0961">Cell wall biogenesis/degradation</keyword>
<keyword id="KW-0963">Cytoplasm</keyword>
<keyword id="KW-0436">Ligase</keyword>
<keyword id="KW-0547">Nucleotide-binding</keyword>
<keyword id="KW-0573">Peptidoglycan synthesis</keyword>
<keyword id="KW-1185">Reference proteome</keyword>